<keyword id="KW-0963">Cytoplasm</keyword>
<keyword id="KW-0456">Lyase</keyword>
<keyword id="KW-1185">Reference proteome</keyword>
<keyword id="KW-0704">Schiff base</keyword>
<gene>
    <name evidence="1" type="primary">deoC</name>
    <name type="ordered locus">SAG2070</name>
</gene>
<name>DEOC_STRA5</name>
<accession>Q8DWZ0</accession>
<protein>
    <recommendedName>
        <fullName evidence="1">Deoxyribose-phosphate aldolase</fullName>
        <shortName evidence="1">DERA</shortName>
        <ecNumber evidence="1">4.1.2.4</ecNumber>
    </recommendedName>
    <alternativeName>
        <fullName evidence="1">2-deoxy-D-ribose 5-phosphate aldolase</fullName>
    </alternativeName>
    <alternativeName>
        <fullName evidence="1">Phosphodeoxyriboaldolase</fullName>
        <shortName evidence="1">Deoxyriboaldolase</shortName>
    </alternativeName>
</protein>
<proteinExistence type="inferred from homology"/>
<sequence length="223" mass="24017">MEVKDILKTVDHTLLATTATWPEIQTILDDAMAYETASACIPASYVKKAAEYVSGKLAICTVIGFPNGYSTTAAKVFECQDAIKNGADEIDMVINLTDVKNGDFDTVEEEIRQIKAACQDHILKVIVETCQLTKEELIELCGVVTRSGADFIKTSTGFSTAGATFEDVEVMAKYVGEGVKIKAAGGISSLEDAEKFIALGASRLGTSRIIKIVKNQKVEEGTY</sequence>
<organism>
    <name type="scientific">Streptococcus agalactiae serotype V (strain ATCC BAA-611 / 2603 V/R)</name>
    <dbReference type="NCBI Taxonomy" id="208435"/>
    <lineage>
        <taxon>Bacteria</taxon>
        <taxon>Bacillati</taxon>
        <taxon>Bacillota</taxon>
        <taxon>Bacilli</taxon>
        <taxon>Lactobacillales</taxon>
        <taxon>Streptococcaceae</taxon>
        <taxon>Streptococcus</taxon>
    </lineage>
</organism>
<reference key="1">
    <citation type="journal article" date="2002" name="Proc. Natl. Acad. Sci. U.S.A.">
        <title>Complete genome sequence and comparative genomic analysis of an emerging human pathogen, serotype V Streptococcus agalactiae.</title>
        <authorList>
            <person name="Tettelin H."/>
            <person name="Masignani V."/>
            <person name="Cieslewicz M.J."/>
            <person name="Eisen J.A."/>
            <person name="Peterson S.N."/>
            <person name="Wessels M.R."/>
            <person name="Paulsen I.T."/>
            <person name="Nelson K.E."/>
            <person name="Margarit I."/>
            <person name="Read T.D."/>
            <person name="Madoff L.C."/>
            <person name="Wolf A.M."/>
            <person name="Beanan M.J."/>
            <person name="Brinkac L.M."/>
            <person name="Daugherty S.C."/>
            <person name="DeBoy R.T."/>
            <person name="Durkin A.S."/>
            <person name="Kolonay J.F."/>
            <person name="Madupu R."/>
            <person name="Lewis M.R."/>
            <person name="Radune D."/>
            <person name="Fedorova N.B."/>
            <person name="Scanlan D."/>
            <person name="Khouri H.M."/>
            <person name="Mulligan S."/>
            <person name="Carty H.A."/>
            <person name="Cline R.T."/>
            <person name="Van Aken S.E."/>
            <person name="Gill J."/>
            <person name="Scarselli M."/>
            <person name="Mora M."/>
            <person name="Iacobini E.T."/>
            <person name="Brettoni C."/>
            <person name="Galli G."/>
            <person name="Mariani M."/>
            <person name="Vegni F."/>
            <person name="Maione D."/>
            <person name="Rinaudo D."/>
            <person name="Rappuoli R."/>
            <person name="Telford J.L."/>
            <person name="Kasper D.L."/>
            <person name="Grandi G."/>
            <person name="Fraser C.M."/>
        </authorList>
    </citation>
    <scope>NUCLEOTIDE SEQUENCE [LARGE SCALE GENOMIC DNA]</scope>
    <source>
        <strain>ATCC BAA-611 / 2603 V/R</strain>
    </source>
</reference>
<evidence type="ECO:0000255" key="1">
    <source>
        <dbReference type="HAMAP-Rule" id="MF_00114"/>
    </source>
</evidence>
<dbReference type="EC" id="4.1.2.4" evidence="1"/>
<dbReference type="EMBL" id="AE009948">
    <property type="protein sequence ID" value="AAN00929.1"/>
    <property type="molecule type" value="Genomic_DNA"/>
</dbReference>
<dbReference type="RefSeq" id="NP_689056.1">
    <property type="nucleotide sequence ID" value="NC_004116.1"/>
</dbReference>
<dbReference type="RefSeq" id="WP_000453154.1">
    <property type="nucleotide sequence ID" value="NC_004116.1"/>
</dbReference>
<dbReference type="SMR" id="Q8DWZ0"/>
<dbReference type="STRING" id="208435.SAG2070"/>
<dbReference type="KEGG" id="sag:SAG2070"/>
<dbReference type="PATRIC" id="fig|208435.3.peg.2072"/>
<dbReference type="HOGENOM" id="CLU_053595_0_2_9"/>
<dbReference type="OrthoDB" id="9778711at2"/>
<dbReference type="UniPathway" id="UPA00002">
    <property type="reaction ID" value="UER00468"/>
</dbReference>
<dbReference type="Proteomes" id="UP000000821">
    <property type="component" value="Chromosome"/>
</dbReference>
<dbReference type="GO" id="GO:0005737">
    <property type="term" value="C:cytoplasm"/>
    <property type="evidence" value="ECO:0007669"/>
    <property type="project" value="UniProtKB-SubCell"/>
</dbReference>
<dbReference type="GO" id="GO:0004139">
    <property type="term" value="F:deoxyribose-phosphate aldolase activity"/>
    <property type="evidence" value="ECO:0007669"/>
    <property type="project" value="UniProtKB-UniRule"/>
</dbReference>
<dbReference type="GO" id="GO:0006018">
    <property type="term" value="P:2-deoxyribose 1-phosphate catabolic process"/>
    <property type="evidence" value="ECO:0007669"/>
    <property type="project" value="UniProtKB-UniRule"/>
</dbReference>
<dbReference type="GO" id="GO:0016052">
    <property type="term" value="P:carbohydrate catabolic process"/>
    <property type="evidence" value="ECO:0007669"/>
    <property type="project" value="TreeGrafter"/>
</dbReference>
<dbReference type="GO" id="GO:0009264">
    <property type="term" value="P:deoxyribonucleotide catabolic process"/>
    <property type="evidence" value="ECO:0007669"/>
    <property type="project" value="InterPro"/>
</dbReference>
<dbReference type="CDD" id="cd00959">
    <property type="entry name" value="DeoC"/>
    <property type="match status" value="1"/>
</dbReference>
<dbReference type="FunFam" id="3.20.20.70:FF:000044">
    <property type="entry name" value="Deoxyribose-phosphate aldolase"/>
    <property type="match status" value="1"/>
</dbReference>
<dbReference type="Gene3D" id="3.20.20.70">
    <property type="entry name" value="Aldolase class I"/>
    <property type="match status" value="1"/>
</dbReference>
<dbReference type="HAMAP" id="MF_00114">
    <property type="entry name" value="DeoC_type1"/>
    <property type="match status" value="1"/>
</dbReference>
<dbReference type="InterPro" id="IPR013785">
    <property type="entry name" value="Aldolase_TIM"/>
</dbReference>
<dbReference type="InterPro" id="IPR011343">
    <property type="entry name" value="DeoC"/>
</dbReference>
<dbReference type="InterPro" id="IPR002915">
    <property type="entry name" value="DeoC/FbaB/LacD_aldolase"/>
</dbReference>
<dbReference type="InterPro" id="IPR028581">
    <property type="entry name" value="DeoC_typeI"/>
</dbReference>
<dbReference type="NCBIfam" id="TIGR00126">
    <property type="entry name" value="deoC"/>
    <property type="match status" value="1"/>
</dbReference>
<dbReference type="PANTHER" id="PTHR10889">
    <property type="entry name" value="DEOXYRIBOSE-PHOSPHATE ALDOLASE"/>
    <property type="match status" value="1"/>
</dbReference>
<dbReference type="PANTHER" id="PTHR10889:SF1">
    <property type="entry name" value="DEOXYRIBOSE-PHOSPHATE ALDOLASE"/>
    <property type="match status" value="1"/>
</dbReference>
<dbReference type="Pfam" id="PF01791">
    <property type="entry name" value="DeoC"/>
    <property type="match status" value="1"/>
</dbReference>
<dbReference type="PIRSF" id="PIRSF001357">
    <property type="entry name" value="DeoC"/>
    <property type="match status" value="1"/>
</dbReference>
<dbReference type="SMART" id="SM01133">
    <property type="entry name" value="DeoC"/>
    <property type="match status" value="1"/>
</dbReference>
<dbReference type="SUPFAM" id="SSF51569">
    <property type="entry name" value="Aldolase"/>
    <property type="match status" value="1"/>
</dbReference>
<feature type="chain" id="PRO_0000057270" description="Deoxyribose-phosphate aldolase">
    <location>
        <begin position="1"/>
        <end position="223"/>
    </location>
</feature>
<feature type="active site" description="Proton donor/acceptor" evidence="1">
    <location>
        <position position="91"/>
    </location>
</feature>
<feature type="active site" description="Schiff-base intermediate with acetaldehyde" evidence="1">
    <location>
        <position position="153"/>
    </location>
</feature>
<feature type="active site" description="Proton donor/acceptor" evidence="1">
    <location>
        <position position="182"/>
    </location>
</feature>
<comment type="function">
    <text evidence="1">Catalyzes a reversible aldol reaction between acetaldehyde and D-glyceraldehyde 3-phosphate to generate 2-deoxy-D-ribose 5-phosphate.</text>
</comment>
<comment type="catalytic activity">
    <reaction evidence="1">
        <text>2-deoxy-D-ribose 5-phosphate = D-glyceraldehyde 3-phosphate + acetaldehyde</text>
        <dbReference type="Rhea" id="RHEA:12821"/>
        <dbReference type="ChEBI" id="CHEBI:15343"/>
        <dbReference type="ChEBI" id="CHEBI:59776"/>
        <dbReference type="ChEBI" id="CHEBI:62877"/>
        <dbReference type="EC" id="4.1.2.4"/>
    </reaction>
</comment>
<comment type="pathway">
    <text evidence="1">Carbohydrate degradation; 2-deoxy-D-ribose 1-phosphate degradation; D-glyceraldehyde 3-phosphate and acetaldehyde from 2-deoxy-alpha-D-ribose 1-phosphate: step 2/2.</text>
</comment>
<comment type="subcellular location">
    <subcellularLocation>
        <location evidence="1">Cytoplasm</location>
    </subcellularLocation>
</comment>
<comment type="similarity">
    <text evidence="1">Belongs to the DeoC/FbaB aldolase family. DeoC type 1 subfamily.</text>
</comment>